<organism>
    <name type="scientific">Lactococcus lactis subsp. cremoris (strain SK11)</name>
    <dbReference type="NCBI Taxonomy" id="272622"/>
    <lineage>
        <taxon>Bacteria</taxon>
        <taxon>Bacillati</taxon>
        <taxon>Bacillota</taxon>
        <taxon>Bacilli</taxon>
        <taxon>Lactobacillales</taxon>
        <taxon>Streptococcaceae</taxon>
        <taxon>Lactococcus</taxon>
        <taxon>Lactococcus cremoris subsp. cremoris</taxon>
    </lineage>
</organism>
<evidence type="ECO:0000255" key="1">
    <source>
        <dbReference type="HAMAP-Rule" id="MF_00004"/>
    </source>
</evidence>
<gene>
    <name evidence="1" type="primary">apt</name>
    <name type="ordered locus">LACR_0657</name>
</gene>
<protein>
    <recommendedName>
        <fullName evidence="1">Adenine phosphoribosyltransferase</fullName>
        <shortName evidence="1">APRT</shortName>
        <ecNumber evidence="1">2.4.2.7</ecNumber>
    </recommendedName>
</protein>
<proteinExistence type="inferred from homology"/>
<dbReference type="EC" id="2.4.2.7" evidence="1"/>
<dbReference type="EMBL" id="CP000425">
    <property type="protein sequence ID" value="ABJ72222.1"/>
    <property type="molecule type" value="Genomic_DNA"/>
</dbReference>
<dbReference type="RefSeq" id="WP_011675774.1">
    <property type="nucleotide sequence ID" value="NC_008527.1"/>
</dbReference>
<dbReference type="SMR" id="Q031A0"/>
<dbReference type="KEGG" id="llc:LACR_0657"/>
<dbReference type="HOGENOM" id="CLU_063339_3_0_9"/>
<dbReference type="UniPathway" id="UPA00588">
    <property type="reaction ID" value="UER00646"/>
</dbReference>
<dbReference type="Proteomes" id="UP000000240">
    <property type="component" value="Chromosome"/>
</dbReference>
<dbReference type="GO" id="GO:0005737">
    <property type="term" value="C:cytoplasm"/>
    <property type="evidence" value="ECO:0007669"/>
    <property type="project" value="UniProtKB-SubCell"/>
</dbReference>
<dbReference type="GO" id="GO:0002055">
    <property type="term" value="F:adenine binding"/>
    <property type="evidence" value="ECO:0007669"/>
    <property type="project" value="TreeGrafter"/>
</dbReference>
<dbReference type="GO" id="GO:0003999">
    <property type="term" value="F:adenine phosphoribosyltransferase activity"/>
    <property type="evidence" value="ECO:0007669"/>
    <property type="project" value="UniProtKB-UniRule"/>
</dbReference>
<dbReference type="GO" id="GO:0016208">
    <property type="term" value="F:AMP binding"/>
    <property type="evidence" value="ECO:0007669"/>
    <property type="project" value="TreeGrafter"/>
</dbReference>
<dbReference type="GO" id="GO:0006168">
    <property type="term" value="P:adenine salvage"/>
    <property type="evidence" value="ECO:0007669"/>
    <property type="project" value="InterPro"/>
</dbReference>
<dbReference type="GO" id="GO:0044209">
    <property type="term" value="P:AMP salvage"/>
    <property type="evidence" value="ECO:0007669"/>
    <property type="project" value="UniProtKB-UniRule"/>
</dbReference>
<dbReference type="GO" id="GO:0006166">
    <property type="term" value="P:purine ribonucleoside salvage"/>
    <property type="evidence" value="ECO:0007669"/>
    <property type="project" value="UniProtKB-KW"/>
</dbReference>
<dbReference type="CDD" id="cd06223">
    <property type="entry name" value="PRTases_typeI"/>
    <property type="match status" value="1"/>
</dbReference>
<dbReference type="FunFam" id="3.40.50.2020:FF:000004">
    <property type="entry name" value="Adenine phosphoribosyltransferase"/>
    <property type="match status" value="1"/>
</dbReference>
<dbReference type="Gene3D" id="3.40.50.2020">
    <property type="match status" value="1"/>
</dbReference>
<dbReference type="HAMAP" id="MF_00004">
    <property type="entry name" value="Aden_phosphoribosyltr"/>
    <property type="match status" value="1"/>
</dbReference>
<dbReference type="InterPro" id="IPR005764">
    <property type="entry name" value="Ade_phspho_trans"/>
</dbReference>
<dbReference type="InterPro" id="IPR000836">
    <property type="entry name" value="PRibTrfase_dom"/>
</dbReference>
<dbReference type="InterPro" id="IPR029057">
    <property type="entry name" value="PRTase-like"/>
</dbReference>
<dbReference type="InterPro" id="IPR050054">
    <property type="entry name" value="UPRTase/APRTase"/>
</dbReference>
<dbReference type="NCBIfam" id="TIGR01090">
    <property type="entry name" value="apt"/>
    <property type="match status" value="1"/>
</dbReference>
<dbReference type="NCBIfam" id="NF002633">
    <property type="entry name" value="PRK02304.1-2"/>
    <property type="match status" value="1"/>
</dbReference>
<dbReference type="NCBIfam" id="NF002634">
    <property type="entry name" value="PRK02304.1-3"/>
    <property type="match status" value="1"/>
</dbReference>
<dbReference type="NCBIfam" id="NF002636">
    <property type="entry name" value="PRK02304.1-5"/>
    <property type="match status" value="1"/>
</dbReference>
<dbReference type="PANTHER" id="PTHR32315">
    <property type="entry name" value="ADENINE PHOSPHORIBOSYLTRANSFERASE"/>
    <property type="match status" value="1"/>
</dbReference>
<dbReference type="PANTHER" id="PTHR32315:SF3">
    <property type="entry name" value="ADENINE PHOSPHORIBOSYLTRANSFERASE"/>
    <property type="match status" value="1"/>
</dbReference>
<dbReference type="Pfam" id="PF00156">
    <property type="entry name" value="Pribosyltran"/>
    <property type="match status" value="1"/>
</dbReference>
<dbReference type="SUPFAM" id="SSF53271">
    <property type="entry name" value="PRTase-like"/>
    <property type="match status" value="1"/>
</dbReference>
<dbReference type="PROSITE" id="PS00103">
    <property type="entry name" value="PUR_PYR_PR_TRANSFER"/>
    <property type="match status" value="1"/>
</dbReference>
<keyword id="KW-0963">Cytoplasm</keyword>
<keyword id="KW-0328">Glycosyltransferase</keyword>
<keyword id="KW-0660">Purine salvage</keyword>
<keyword id="KW-0808">Transferase</keyword>
<feature type="chain" id="PRO_0000329355" description="Adenine phosphoribosyltransferase">
    <location>
        <begin position="1"/>
        <end position="170"/>
    </location>
</feature>
<comment type="function">
    <text evidence="1">Catalyzes a salvage reaction resulting in the formation of AMP, that is energically less costly than de novo synthesis.</text>
</comment>
<comment type="catalytic activity">
    <reaction evidence="1">
        <text>AMP + diphosphate = 5-phospho-alpha-D-ribose 1-diphosphate + adenine</text>
        <dbReference type="Rhea" id="RHEA:16609"/>
        <dbReference type="ChEBI" id="CHEBI:16708"/>
        <dbReference type="ChEBI" id="CHEBI:33019"/>
        <dbReference type="ChEBI" id="CHEBI:58017"/>
        <dbReference type="ChEBI" id="CHEBI:456215"/>
        <dbReference type="EC" id="2.4.2.7"/>
    </reaction>
</comment>
<comment type="pathway">
    <text evidence="1">Purine metabolism; AMP biosynthesis via salvage pathway; AMP from adenine: step 1/1.</text>
</comment>
<comment type="subunit">
    <text evidence="1">Homodimer.</text>
</comment>
<comment type="subcellular location">
    <subcellularLocation>
        <location evidence="1">Cytoplasm</location>
    </subcellularLocation>
</comment>
<comment type="similarity">
    <text evidence="1">Belongs to the purine/pyrimidine phosphoribosyltransferase family.</text>
</comment>
<reference key="1">
    <citation type="journal article" date="2006" name="Proc. Natl. Acad. Sci. U.S.A.">
        <title>Comparative genomics of the lactic acid bacteria.</title>
        <authorList>
            <person name="Makarova K.S."/>
            <person name="Slesarev A."/>
            <person name="Wolf Y.I."/>
            <person name="Sorokin A."/>
            <person name="Mirkin B."/>
            <person name="Koonin E.V."/>
            <person name="Pavlov A."/>
            <person name="Pavlova N."/>
            <person name="Karamychev V."/>
            <person name="Polouchine N."/>
            <person name="Shakhova V."/>
            <person name="Grigoriev I."/>
            <person name="Lou Y."/>
            <person name="Rohksar D."/>
            <person name="Lucas S."/>
            <person name="Huang K."/>
            <person name="Goodstein D.M."/>
            <person name="Hawkins T."/>
            <person name="Plengvidhya V."/>
            <person name="Welker D."/>
            <person name="Hughes J."/>
            <person name="Goh Y."/>
            <person name="Benson A."/>
            <person name="Baldwin K."/>
            <person name="Lee J.-H."/>
            <person name="Diaz-Muniz I."/>
            <person name="Dosti B."/>
            <person name="Smeianov V."/>
            <person name="Wechter W."/>
            <person name="Barabote R."/>
            <person name="Lorca G."/>
            <person name="Altermann E."/>
            <person name="Barrangou R."/>
            <person name="Ganesan B."/>
            <person name="Xie Y."/>
            <person name="Rawsthorne H."/>
            <person name="Tamir D."/>
            <person name="Parker C."/>
            <person name="Breidt F."/>
            <person name="Broadbent J.R."/>
            <person name="Hutkins R."/>
            <person name="O'Sullivan D."/>
            <person name="Steele J."/>
            <person name="Unlu G."/>
            <person name="Saier M.H. Jr."/>
            <person name="Klaenhammer T."/>
            <person name="Richardson P."/>
            <person name="Kozyavkin S."/>
            <person name="Weimer B.C."/>
            <person name="Mills D.A."/>
        </authorList>
    </citation>
    <scope>NUCLEOTIDE SEQUENCE [LARGE SCALE GENOMIC DNA]</scope>
    <source>
        <strain>SK11</strain>
    </source>
</reference>
<accession>Q031A0</accession>
<sequence length="170" mass="18682">MELKDYIATIENYPKEGVVFRDISPLMADGNAYNYAATEIVQYARDKEIDMVVGPEARGFIIGCPVAFALGVGFAPVRKPGKLPREVIEATYEKEYGTDTLTMHSDSIKPGQRVLIVDDLLATGGTIAATIELVEKMGGVVVGCAFLIELDELKGREKIGNYVYKVLMHY</sequence>
<name>APT_LACLS</name>